<name>NUSA_SALTY</name>
<proteinExistence type="inferred from homology"/>
<reference key="1">
    <citation type="journal article" date="1994" name="J. Bacteriol.">
        <title>Escherichia coli-Salmonella typhimurium hybrid nusA genes: identification of a short motif required for action of the lambda N transcription antitermination protein.</title>
        <authorList>
            <person name="Craven M.G."/>
            <person name="Granston A.E."/>
            <person name="Schauer A.T."/>
            <person name="Zheng C."/>
            <person name="Gray T.A."/>
            <person name="Friedman D.I."/>
        </authorList>
    </citation>
    <scope>NUCLEOTIDE SEQUENCE [GENOMIC DNA]</scope>
    <source>
        <strain>LT2</strain>
    </source>
</reference>
<reference key="2">
    <citation type="journal article" date="2001" name="Nature">
        <title>Complete genome sequence of Salmonella enterica serovar Typhimurium LT2.</title>
        <authorList>
            <person name="McClelland M."/>
            <person name="Sanderson K.E."/>
            <person name="Spieth J."/>
            <person name="Clifton S.W."/>
            <person name="Latreille P."/>
            <person name="Courtney L."/>
            <person name="Porwollik S."/>
            <person name="Ali J."/>
            <person name="Dante M."/>
            <person name="Du F."/>
            <person name="Hou S."/>
            <person name="Layman D."/>
            <person name="Leonard S."/>
            <person name="Nguyen C."/>
            <person name="Scott K."/>
            <person name="Holmes A."/>
            <person name="Grewal N."/>
            <person name="Mulvaney E."/>
            <person name="Ryan E."/>
            <person name="Sun H."/>
            <person name="Florea L."/>
            <person name="Miller W."/>
            <person name="Stoneking T."/>
            <person name="Nhan M."/>
            <person name="Waterston R."/>
            <person name="Wilson R.K."/>
        </authorList>
    </citation>
    <scope>NUCLEOTIDE SEQUENCE [LARGE SCALE GENOMIC DNA]</scope>
    <source>
        <strain>LT2 / SGSC1412 / ATCC 700720</strain>
    </source>
</reference>
<keyword id="KW-0963">Cytoplasm</keyword>
<keyword id="KW-1185">Reference proteome</keyword>
<keyword id="KW-0677">Repeat</keyword>
<keyword id="KW-0694">RNA-binding</keyword>
<keyword id="KW-0804">Transcription</keyword>
<keyword id="KW-0889">Transcription antitermination</keyword>
<keyword id="KW-0805">Transcription regulation</keyword>
<keyword id="KW-0806">Transcription termination</keyword>
<protein>
    <recommendedName>
        <fullName evidence="1">Transcription termination/antitermination protein NusA</fullName>
    </recommendedName>
</protein>
<accession>P37430</accession>
<organism>
    <name type="scientific">Salmonella typhimurium (strain LT2 / SGSC1412 / ATCC 700720)</name>
    <dbReference type="NCBI Taxonomy" id="99287"/>
    <lineage>
        <taxon>Bacteria</taxon>
        <taxon>Pseudomonadati</taxon>
        <taxon>Pseudomonadota</taxon>
        <taxon>Gammaproteobacteria</taxon>
        <taxon>Enterobacterales</taxon>
        <taxon>Enterobacteriaceae</taxon>
        <taxon>Salmonella</taxon>
    </lineage>
</organism>
<evidence type="ECO:0000255" key="1">
    <source>
        <dbReference type="HAMAP-Rule" id="MF_00945"/>
    </source>
</evidence>
<evidence type="ECO:0000305" key="2"/>
<comment type="function">
    <text evidence="1">Participates in both transcription termination and antitermination.</text>
</comment>
<comment type="subunit">
    <text evidence="1">Monomer. Binds directly to the core enzyme of the DNA-dependent RNA polymerase and to nascent RNA.</text>
</comment>
<comment type="subcellular location">
    <subcellularLocation>
        <location evidence="1">Cytoplasm</location>
    </subcellularLocation>
</comment>
<comment type="similarity">
    <text evidence="1">Belongs to the NusA family.</text>
</comment>
<dbReference type="EMBL" id="M61008">
    <property type="protein sequence ID" value="AAA20049.1"/>
    <property type="molecule type" value="Unassigned_RNA"/>
</dbReference>
<dbReference type="EMBL" id="AE006468">
    <property type="protein sequence ID" value="AAL22159.1"/>
    <property type="molecule type" value="Genomic_DNA"/>
</dbReference>
<dbReference type="PIR" id="A53377">
    <property type="entry name" value="A53377"/>
</dbReference>
<dbReference type="RefSeq" id="NP_462200.1">
    <property type="nucleotide sequence ID" value="NC_003197.2"/>
</dbReference>
<dbReference type="RefSeq" id="WP_001031038.1">
    <property type="nucleotide sequence ID" value="NC_003197.2"/>
</dbReference>
<dbReference type="SMR" id="P37430"/>
<dbReference type="STRING" id="99287.STM3287"/>
<dbReference type="PaxDb" id="99287-STM3287"/>
<dbReference type="GeneID" id="1254810"/>
<dbReference type="KEGG" id="stm:STM3287"/>
<dbReference type="PATRIC" id="fig|99287.12.peg.3486"/>
<dbReference type="HOGENOM" id="CLU_029242_0_0_6"/>
<dbReference type="OMA" id="MKGSRIH"/>
<dbReference type="PhylomeDB" id="P37430"/>
<dbReference type="BioCyc" id="SENT99287:STM3287-MONOMER"/>
<dbReference type="Proteomes" id="UP000001014">
    <property type="component" value="Chromosome"/>
</dbReference>
<dbReference type="GO" id="GO:0005829">
    <property type="term" value="C:cytosol"/>
    <property type="evidence" value="ECO:0000318"/>
    <property type="project" value="GO_Central"/>
</dbReference>
<dbReference type="GO" id="GO:0003700">
    <property type="term" value="F:DNA-binding transcription factor activity"/>
    <property type="evidence" value="ECO:0007669"/>
    <property type="project" value="InterPro"/>
</dbReference>
<dbReference type="GO" id="GO:0000166">
    <property type="term" value="F:nucleotide binding"/>
    <property type="evidence" value="ECO:0007669"/>
    <property type="project" value="InterPro"/>
</dbReference>
<dbReference type="GO" id="GO:0003723">
    <property type="term" value="F:RNA binding"/>
    <property type="evidence" value="ECO:0007669"/>
    <property type="project" value="UniProtKB-UniRule"/>
</dbReference>
<dbReference type="GO" id="GO:0006353">
    <property type="term" value="P:DNA-templated transcription termination"/>
    <property type="evidence" value="ECO:0007669"/>
    <property type="project" value="UniProtKB-UniRule"/>
</dbReference>
<dbReference type="GO" id="GO:0031564">
    <property type="term" value="P:transcription antitermination"/>
    <property type="evidence" value="ECO:0000318"/>
    <property type="project" value="GO_Central"/>
</dbReference>
<dbReference type="CDD" id="cd02134">
    <property type="entry name" value="KH-II_NusA_rpt1"/>
    <property type="match status" value="1"/>
</dbReference>
<dbReference type="CDD" id="cd22529">
    <property type="entry name" value="KH-II_NusA_rpt2"/>
    <property type="match status" value="1"/>
</dbReference>
<dbReference type="CDD" id="cd04455">
    <property type="entry name" value="S1_NusA"/>
    <property type="match status" value="1"/>
</dbReference>
<dbReference type="FunFam" id="1.10.150.20:FF:000015">
    <property type="entry name" value="Transcription termination/antitermination protein NusA"/>
    <property type="match status" value="1"/>
</dbReference>
<dbReference type="FunFam" id="1.10.150.20:FF:000018">
    <property type="entry name" value="Transcription termination/antitermination protein NusA"/>
    <property type="match status" value="1"/>
</dbReference>
<dbReference type="FunFam" id="2.40.50.140:FF:000092">
    <property type="entry name" value="Transcription termination/antitermination protein NusA"/>
    <property type="match status" value="1"/>
</dbReference>
<dbReference type="FunFam" id="3.30.1480.10:FF:000001">
    <property type="entry name" value="Transcription termination/antitermination protein NusA"/>
    <property type="match status" value="1"/>
</dbReference>
<dbReference type="FunFam" id="3.30.300.20:FF:000002">
    <property type="entry name" value="Transcription termination/antitermination protein NusA"/>
    <property type="match status" value="1"/>
</dbReference>
<dbReference type="FunFam" id="3.30.300.20:FF:000005">
    <property type="entry name" value="Transcription termination/antitermination protein NusA"/>
    <property type="match status" value="1"/>
</dbReference>
<dbReference type="Gene3D" id="3.30.300.20">
    <property type="match status" value="2"/>
</dbReference>
<dbReference type="Gene3D" id="1.10.150.20">
    <property type="entry name" value="5' to 3' exonuclease, C-terminal subdomain"/>
    <property type="match status" value="2"/>
</dbReference>
<dbReference type="Gene3D" id="2.40.50.140">
    <property type="entry name" value="Nucleic acid-binding proteins"/>
    <property type="match status" value="1"/>
</dbReference>
<dbReference type="Gene3D" id="3.30.1480.10">
    <property type="entry name" value="NusA, N-terminal domain"/>
    <property type="match status" value="1"/>
</dbReference>
<dbReference type="HAMAP" id="MF_00945_B">
    <property type="entry name" value="NusA_B"/>
    <property type="match status" value="1"/>
</dbReference>
<dbReference type="InterPro" id="IPR010995">
    <property type="entry name" value="DNA_repair_Rad51/TF_NusA_a-hlx"/>
</dbReference>
<dbReference type="InterPro" id="IPR004087">
    <property type="entry name" value="KH_dom"/>
</dbReference>
<dbReference type="InterPro" id="IPR015946">
    <property type="entry name" value="KH_dom-like_a/b"/>
</dbReference>
<dbReference type="InterPro" id="IPR025249">
    <property type="entry name" value="KH_dom_NusA-like"/>
</dbReference>
<dbReference type="InterPro" id="IPR009019">
    <property type="entry name" value="KH_sf_prok-type"/>
</dbReference>
<dbReference type="InterPro" id="IPR012340">
    <property type="entry name" value="NA-bd_OB-fold"/>
</dbReference>
<dbReference type="InterPro" id="IPR030842">
    <property type="entry name" value="NusA_bac"/>
</dbReference>
<dbReference type="InterPro" id="IPR036555">
    <property type="entry name" value="NusA_N_sf"/>
</dbReference>
<dbReference type="InterPro" id="IPR003029">
    <property type="entry name" value="S1_domain"/>
</dbReference>
<dbReference type="InterPro" id="IPR013735">
    <property type="entry name" value="TF_NusA_N"/>
</dbReference>
<dbReference type="InterPro" id="IPR010214">
    <property type="entry name" value="Tscrpt_termin_fac_NusA_C_rpt"/>
</dbReference>
<dbReference type="InterPro" id="IPR010213">
    <property type="entry name" value="Tscrpt_termination_fac_NusA"/>
</dbReference>
<dbReference type="NCBIfam" id="TIGR01953">
    <property type="entry name" value="NusA"/>
    <property type="match status" value="1"/>
</dbReference>
<dbReference type="NCBIfam" id="TIGR01954">
    <property type="entry name" value="nusA_Cterm_rpt"/>
    <property type="match status" value="2"/>
</dbReference>
<dbReference type="PANTHER" id="PTHR22648">
    <property type="entry name" value="TRANSCRIPTION TERMINATION FACTOR NUSA"/>
    <property type="match status" value="1"/>
</dbReference>
<dbReference type="PANTHER" id="PTHR22648:SF0">
    <property type="entry name" value="TRANSCRIPTION TERMINATION_ANTITERMINATION PROTEIN NUSA"/>
    <property type="match status" value="1"/>
</dbReference>
<dbReference type="Pfam" id="PF14520">
    <property type="entry name" value="HHH_5"/>
    <property type="match status" value="1"/>
</dbReference>
<dbReference type="Pfam" id="PF13184">
    <property type="entry name" value="KH_5"/>
    <property type="match status" value="1"/>
</dbReference>
<dbReference type="Pfam" id="PF08529">
    <property type="entry name" value="NusA_N"/>
    <property type="match status" value="1"/>
</dbReference>
<dbReference type="SMART" id="SM00322">
    <property type="entry name" value="KH"/>
    <property type="match status" value="2"/>
</dbReference>
<dbReference type="SMART" id="SM00316">
    <property type="entry name" value="S1"/>
    <property type="match status" value="1"/>
</dbReference>
<dbReference type="SUPFAM" id="SSF50249">
    <property type="entry name" value="Nucleic acid-binding proteins"/>
    <property type="match status" value="1"/>
</dbReference>
<dbReference type="SUPFAM" id="SSF54814">
    <property type="entry name" value="Prokaryotic type KH domain (KH-domain type II)"/>
    <property type="match status" value="2"/>
</dbReference>
<dbReference type="SUPFAM" id="SSF47794">
    <property type="entry name" value="Rad51 N-terminal domain-like"/>
    <property type="match status" value="2"/>
</dbReference>
<dbReference type="SUPFAM" id="SSF69705">
    <property type="entry name" value="Transcription factor NusA, N-terminal domain"/>
    <property type="match status" value="1"/>
</dbReference>
<dbReference type="PROSITE" id="PS50084">
    <property type="entry name" value="KH_TYPE_1"/>
    <property type="match status" value="1"/>
</dbReference>
<dbReference type="PROSITE" id="PS50126">
    <property type="entry name" value="S1"/>
    <property type="match status" value="1"/>
</dbReference>
<sequence>MNKEILAVVEAVSNEKALPREKIFEALESALATATKKKYEQEIDVRVEIDRKSGDFDTFRRWLIVEEVTMPTKEITLEAARFEDESLNVGDYVEDQIESVTFDRITTQTAKQVIVQKVREAERAMVVDQFRDQEGEIVTGVVKKVNRDNISLEIKSEGMAGNAEAVILREDMLPRENFRPGDRIRGVLYAVRPEARGAQLFVTRSKPEMLIELFRIEVPEIGEEVIEIKAAARDPGSRAKIAVKTNDKRIDPVGACVGMRGARVQAVSTELGGERIDIVLWDDNPAQFVINAMAPADVASIVVDEDKHTMDIAVEAGNLAQAIGRNGQNVRLASQLSGWELNVMTVDDLQAKHQAEAHAAIEIFTKYLDIDEEFATVLVEEGFSTLEELAYVPMKELLEIDGLDEPTVEALRERAKNALATLAQDQEASLGDNKPADDLLNLEGLDRDMAFKLAARGVCTLEDLADQGIDDLADIEGLTDEKAGELIMAARNICWFGDEA</sequence>
<gene>
    <name evidence="1" type="primary">nusA</name>
    <name type="ordered locus">STM3287</name>
</gene>
<feature type="chain" id="PRO_0000181978" description="Transcription termination/antitermination protein NusA">
    <location>
        <begin position="1"/>
        <end position="500"/>
    </location>
</feature>
<feature type="domain" description="S1 motif" evidence="1">
    <location>
        <begin position="135"/>
        <end position="205"/>
    </location>
</feature>
<feature type="domain" description="KH" evidence="1">
    <location>
        <begin position="307"/>
        <end position="373"/>
    </location>
</feature>
<feature type="repeat" description="1">
    <location>
        <begin position="369"/>
        <end position="419"/>
    </location>
</feature>
<feature type="repeat" description="2">
    <location>
        <begin position="444"/>
        <end position="494"/>
    </location>
</feature>
<feature type="region of interest" description="2 X 51 AA approximate repeats">
    <location>
        <begin position="369"/>
        <end position="494"/>
    </location>
</feature>
<feature type="sequence conflict" description="In Ref. 1; AAA20049." evidence="2" ref="1">
    <original>G</original>
    <variation>R</variation>
    <location>
        <position position="261"/>
    </location>
</feature>
<feature type="sequence conflict" description="In Ref. 1; AAA20049." evidence="2" ref="1">
    <original>L</original>
    <variation>V</variation>
    <location>
        <position position="445"/>
    </location>
</feature>
<feature type="sequence conflict" description="In Ref. 1; AAA20049." evidence="2" ref="1">
    <original>D</original>
    <variation>Q</variation>
    <location>
        <position position="466"/>
    </location>
</feature>
<feature type="sequence conflict" description="In Ref. 1; AAA20049." evidence="2" ref="1">
    <original>D</original>
    <variation>H</variation>
    <location>
        <position position="471"/>
    </location>
</feature>
<feature type="sequence conflict" description="In Ref. 1; AAA20049." evidence="2" ref="1">
    <original>E</original>
    <variation>A</variation>
    <location>
        <position position="485"/>
    </location>
</feature>
<feature type="sequence conflict" description="In Ref. 1; AAA20049." evidence="2" ref="1">
    <original>M</original>
    <variation>I</variation>
    <location>
        <position position="488"/>
    </location>
</feature>